<sequence>MRVLHVCSELYPILKTGGLADVTAALPPALASFGVDSRVLVPGFPAFMNAIKDKQLLINIPSRFGAEEINIFLAKIPNTKIDIYVVDAPSLFARPGNPYADSSNQAYADNYLRFALLGWVAARISEGLDAKWKPEVVHSHDWHAGLVPAYIKASELASGKKAVKTVFTVHNLAYQGLFPMSVFAELDLPGIFLSMNGLEFYGQVSFMKAGLYFADKITTVSPTYAKEIQSYEQGCGLEGLLADRHNDLYGVLNGVDPQVWNPKKDTLIEANYSVTTANVGKAKCKTALQAMTGLAKKEDAVVFGIVTRLTEQKGLNLLIEAIGEITSRGGQVVLLGSGDKALEEAFLAAAKKSPKSIAVQIGYDEEQAHRIIAGSDVILVPSRFEPCGLTQLYGLTYGTLPLVHKVGGLADTVTDSSLENLADGTATGFVFDEFSVESLTLAIRRAFALYNRKADWKKVRKTAMQQKVDWNAAADKIHQIYSQLV</sequence>
<dbReference type="EC" id="2.4.1.21" evidence="1"/>
<dbReference type="EMBL" id="CP000937">
    <property type="protein sequence ID" value="ABZ86541.1"/>
    <property type="molecule type" value="Genomic_DNA"/>
</dbReference>
<dbReference type="SMR" id="B0TZI2"/>
<dbReference type="CAZy" id="GT5">
    <property type="family name" value="Glycosyltransferase Family 5"/>
</dbReference>
<dbReference type="KEGG" id="fph:Fphi_0325"/>
<dbReference type="eggNOG" id="COG0297">
    <property type="taxonomic scope" value="Bacteria"/>
</dbReference>
<dbReference type="HOGENOM" id="CLU_009583_18_2_6"/>
<dbReference type="UniPathway" id="UPA00164"/>
<dbReference type="GO" id="GO:0005829">
    <property type="term" value="C:cytosol"/>
    <property type="evidence" value="ECO:0007669"/>
    <property type="project" value="TreeGrafter"/>
</dbReference>
<dbReference type="GO" id="GO:0009011">
    <property type="term" value="F:alpha-1,4-glucan glucosyltransferase (ADP-glucose donor) activity"/>
    <property type="evidence" value="ECO:0007669"/>
    <property type="project" value="UniProtKB-UniRule"/>
</dbReference>
<dbReference type="GO" id="GO:0004373">
    <property type="term" value="F:alpha-1,4-glucan glucosyltransferase (UDP-glucose donor) activity"/>
    <property type="evidence" value="ECO:0007669"/>
    <property type="project" value="InterPro"/>
</dbReference>
<dbReference type="GO" id="GO:0005978">
    <property type="term" value="P:glycogen biosynthetic process"/>
    <property type="evidence" value="ECO:0007669"/>
    <property type="project" value="UniProtKB-UniRule"/>
</dbReference>
<dbReference type="CDD" id="cd03791">
    <property type="entry name" value="GT5_Glycogen_synthase_DULL1-like"/>
    <property type="match status" value="1"/>
</dbReference>
<dbReference type="Gene3D" id="3.40.50.2000">
    <property type="entry name" value="Glycogen Phosphorylase B"/>
    <property type="match status" value="2"/>
</dbReference>
<dbReference type="HAMAP" id="MF_00484">
    <property type="entry name" value="Glycogen_synth"/>
    <property type="match status" value="1"/>
</dbReference>
<dbReference type="InterPro" id="IPR001296">
    <property type="entry name" value="Glyco_trans_1"/>
</dbReference>
<dbReference type="InterPro" id="IPR011835">
    <property type="entry name" value="GS/SS"/>
</dbReference>
<dbReference type="InterPro" id="IPR013534">
    <property type="entry name" value="Starch_synth_cat_dom"/>
</dbReference>
<dbReference type="NCBIfam" id="TIGR02095">
    <property type="entry name" value="glgA"/>
    <property type="match status" value="1"/>
</dbReference>
<dbReference type="NCBIfam" id="NF001899">
    <property type="entry name" value="PRK00654.1-2"/>
    <property type="match status" value="1"/>
</dbReference>
<dbReference type="PANTHER" id="PTHR45825:SF11">
    <property type="entry name" value="ALPHA AMYLASE DOMAIN-CONTAINING PROTEIN"/>
    <property type="match status" value="1"/>
</dbReference>
<dbReference type="PANTHER" id="PTHR45825">
    <property type="entry name" value="GRANULE-BOUND STARCH SYNTHASE 1, CHLOROPLASTIC/AMYLOPLASTIC"/>
    <property type="match status" value="1"/>
</dbReference>
<dbReference type="Pfam" id="PF08323">
    <property type="entry name" value="Glyco_transf_5"/>
    <property type="match status" value="1"/>
</dbReference>
<dbReference type="Pfam" id="PF00534">
    <property type="entry name" value="Glycos_transf_1"/>
    <property type="match status" value="1"/>
</dbReference>
<dbReference type="SUPFAM" id="SSF53756">
    <property type="entry name" value="UDP-Glycosyltransferase/glycogen phosphorylase"/>
    <property type="match status" value="1"/>
</dbReference>
<reference key="1">
    <citation type="submission" date="2007-12" db="EMBL/GenBank/DDBJ databases">
        <title>Complete sequence of chromosome of Francisella philomiragia subsp. philomiragia ATCC 25017.</title>
        <authorList>
            <consortium name="US DOE Joint Genome Institute"/>
            <person name="Copeland A."/>
            <person name="Lucas S."/>
            <person name="Lapidus A."/>
            <person name="Barry K."/>
            <person name="Detter J.C."/>
            <person name="Glavina del Rio T."/>
            <person name="Hammon N."/>
            <person name="Israni S."/>
            <person name="Dalin E."/>
            <person name="Tice H."/>
            <person name="Pitluck S."/>
            <person name="Chain P."/>
            <person name="Malfatti S."/>
            <person name="Shin M."/>
            <person name="Vergez L."/>
            <person name="Schmutz J."/>
            <person name="Larimer F."/>
            <person name="Land M."/>
            <person name="Hauser L."/>
            <person name="Richardson P."/>
        </authorList>
    </citation>
    <scope>NUCLEOTIDE SEQUENCE [LARGE SCALE GENOMIC DNA]</scope>
    <source>
        <strain>ATCC 25017 / CCUG 19701 / FSC 153 / O#319-036</strain>
    </source>
</reference>
<organism>
    <name type="scientific">Francisella philomiragia subsp. philomiragia (strain ATCC 25017 / CCUG 19701 / FSC 153 / O#319-036)</name>
    <dbReference type="NCBI Taxonomy" id="484022"/>
    <lineage>
        <taxon>Bacteria</taxon>
        <taxon>Pseudomonadati</taxon>
        <taxon>Pseudomonadota</taxon>
        <taxon>Gammaproteobacteria</taxon>
        <taxon>Thiotrichales</taxon>
        <taxon>Francisellaceae</taxon>
        <taxon>Francisella</taxon>
    </lineage>
</organism>
<feature type="chain" id="PRO_1000081325" description="Glycogen synthase">
    <location>
        <begin position="1"/>
        <end position="485"/>
    </location>
</feature>
<feature type="binding site" evidence="1">
    <location>
        <position position="15"/>
    </location>
    <ligand>
        <name>ADP-alpha-D-glucose</name>
        <dbReference type="ChEBI" id="CHEBI:57498"/>
    </ligand>
</feature>
<name>GLGA_FRAP2</name>
<keyword id="KW-0320">Glycogen biosynthesis</keyword>
<keyword id="KW-0328">Glycosyltransferase</keyword>
<keyword id="KW-0808">Transferase</keyword>
<gene>
    <name evidence="1" type="primary">glgA</name>
    <name type="ordered locus">Fphi_0325</name>
</gene>
<evidence type="ECO:0000255" key="1">
    <source>
        <dbReference type="HAMAP-Rule" id="MF_00484"/>
    </source>
</evidence>
<protein>
    <recommendedName>
        <fullName evidence="1">Glycogen synthase</fullName>
        <ecNumber evidence="1">2.4.1.21</ecNumber>
    </recommendedName>
    <alternativeName>
        <fullName evidence="1">Starch [bacterial glycogen] synthase</fullName>
    </alternativeName>
</protein>
<accession>B0TZI2</accession>
<comment type="function">
    <text evidence="1">Synthesizes alpha-1,4-glucan chains using ADP-glucose.</text>
</comment>
<comment type="catalytic activity">
    <reaction evidence="1">
        <text>[(1-&gt;4)-alpha-D-glucosyl](n) + ADP-alpha-D-glucose = [(1-&gt;4)-alpha-D-glucosyl](n+1) + ADP + H(+)</text>
        <dbReference type="Rhea" id="RHEA:18189"/>
        <dbReference type="Rhea" id="RHEA-COMP:9584"/>
        <dbReference type="Rhea" id="RHEA-COMP:9587"/>
        <dbReference type="ChEBI" id="CHEBI:15378"/>
        <dbReference type="ChEBI" id="CHEBI:15444"/>
        <dbReference type="ChEBI" id="CHEBI:57498"/>
        <dbReference type="ChEBI" id="CHEBI:456216"/>
        <dbReference type="EC" id="2.4.1.21"/>
    </reaction>
</comment>
<comment type="pathway">
    <text evidence="1">Glycan biosynthesis; glycogen biosynthesis.</text>
</comment>
<comment type="similarity">
    <text evidence="1">Belongs to the glycosyltransferase 1 family. Bacterial/plant glycogen synthase subfamily.</text>
</comment>
<proteinExistence type="inferred from homology"/>